<feature type="chain" id="PRO_1000007453" description="Large ribosomal subunit protein uL29">
    <location>
        <begin position="1"/>
        <end position="72"/>
    </location>
</feature>
<evidence type="ECO:0000255" key="1">
    <source>
        <dbReference type="HAMAP-Rule" id="MF_00374"/>
    </source>
</evidence>
<evidence type="ECO:0000305" key="2"/>
<reference key="1">
    <citation type="journal article" date="2006" name="DNA Res.">
        <title>Genome sequence of the cat pathogen, Chlamydophila felis.</title>
        <authorList>
            <person name="Azuma Y."/>
            <person name="Hirakawa H."/>
            <person name="Yamashita A."/>
            <person name="Cai Y."/>
            <person name="Rahman M.A."/>
            <person name="Suzuki H."/>
            <person name="Mitaku S."/>
            <person name="Toh H."/>
            <person name="Goto S."/>
            <person name="Murakami T."/>
            <person name="Sugi K."/>
            <person name="Hayashi H."/>
            <person name="Fukushi H."/>
            <person name="Hattori M."/>
            <person name="Kuhara S."/>
            <person name="Shirai M."/>
        </authorList>
    </citation>
    <scope>NUCLEOTIDE SEQUENCE [LARGE SCALE GENOMIC DNA]</scope>
    <source>
        <strain>Fe/C-56</strain>
    </source>
</reference>
<proteinExistence type="inferred from homology"/>
<dbReference type="EMBL" id="AP006861">
    <property type="protein sequence ID" value="BAE81677.1"/>
    <property type="molecule type" value="Genomic_DNA"/>
</dbReference>
<dbReference type="RefSeq" id="WP_011458450.1">
    <property type="nucleotide sequence ID" value="NC_007899.1"/>
</dbReference>
<dbReference type="SMR" id="Q252W1"/>
<dbReference type="STRING" id="264202.CF0905"/>
<dbReference type="KEGG" id="cfe:CF0905"/>
<dbReference type="eggNOG" id="COG0255">
    <property type="taxonomic scope" value="Bacteria"/>
</dbReference>
<dbReference type="HOGENOM" id="CLU_2715043_0_0_0"/>
<dbReference type="OrthoDB" id="18593at2"/>
<dbReference type="Proteomes" id="UP000001260">
    <property type="component" value="Chromosome"/>
</dbReference>
<dbReference type="GO" id="GO:0022625">
    <property type="term" value="C:cytosolic large ribosomal subunit"/>
    <property type="evidence" value="ECO:0007669"/>
    <property type="project" value="TreeGrafter"/>
</dbReference>
<dbReference type="GO" id="GO:0003735">
    <property type="term" value="F:structural constituent of ribosome"/>
    <property type="evidence" value="ECO:0007669"/>
    <property type="project" value="InterPro"/>
</dbReference>
<dbReference type="GO" id="GO:0006412">
    <property type="term" value="P:translation"/>
    <property type="evidence" value="ECO:0007669"/>
    <property type="project" value="UniProtKB-UniRule"/>
</dbReference>
<dbReference type="Gene3D" id="1.10.287.310">
    <property type="match status" value="1"/>
</dbReference>
<dbReference type="HAMAP" id="MF_00374">
    <property type="entry name" value="Ribosomal_uL29"/>
    <property type="match status" value="1"/>
</dbReference>
<dbReference type="InterPro" id="IPR050063">
    <property type="entry name" value="Ribosomal_protein_uL29"/>
</dbReference>
<dbReference type="InterPro" id="IPR001854">
    <property type="entry name" value="Ribosomal_uL29"/>
</dbReference>
<dbReference type="InterPro" id="IPR036049">
    <property type="entry name" value="Ribosomal_uL29_sf"/>
</dbReference>
<dbReference type="NCBIfam" id="TIGR00012">
    <property type="entry name" value="L29"/>
    <property type="match status" value="1"/>
</dbReference>
<dbReference type="PANTHER" id="PTHR10916">
    <property type="entry name" value="60S RIBOSOMAL PROTEIN L35/50S RIBOSOMAL PROTEIN L29"/>
    <property type="match status" value="1"/>
</dbReference>
<dbReference type="PANTHER" id="PTHR10916:SF0">
    <property type="entry name" value="LARGE RIBOSOMAL SUBUNIT PROTEIN UL29C"/>
    <property type="match status" value="1"/>
</dbReference>
<dbReference type="Pfam" id="PF00831">
    <property type="entry name" value="Ribosomal_L29"/>
    <property type="match status" value="1"/>
</dbReference>
<dbReference type="SUPFAM" id="SSF46561">
    <property type="entry name" value="Ribosomal protein L29 (L29p)"/>
    <property type="match status" value="1"/>
</dbReference>
<accession>Q252W1</accession>
<sequence>MAGKKKLLAELREKSTDELDAFIHENKKALFSLRAEVGLQNKAVKTHLFSMYKKNIARSMTVKQEKEGKIDG</sequence>
<comment type="similarity">
    <text evidence="1">Belongs to the universal ribosomal protein uL29 family.</text>
</comment>
<gene>
    <name evidence="1" type="primary">rpmC</name>
    <name type="ordered locus">CF0905</name>
</gene>
<protein>
    <recommendedName>
        <fullName evidence="1">Large ribosomal subunit protein uL29</fullName>
    </recommendedName>
    <alternativeName>
        <fullName evidence="2">50S ribosomal protein L29</fullName>
    </alternativeName>
</protein>
<organism>
    <name type="scientific">Chlamydia felis (strain Fe/C-56)</name>
    <name type="common">Chlamydophila felis</name>
    <dbReference type="NCBI Taxonomy" id="264202"/>
    <lineage>
        <taxon>Bacteria</taxon>
        <taxon>Pseudomonadati</taxon>
        <taxon>Chlamydiota</taxon>
        <taxon>Chlamydiia</taxon>
        <taxon>Chlamydiales</taxon>
        <taxon>Chlamydiaceae</taxon>
        <taxon>Chlamydia/Chlamydophila group</taxon>
        <taxon>Chlamydia</taxon>
    </lineage>
</organism>
<name>RL29_CHLFF</name>
<keyword id="KW-0687">Ribonucleoprotein</keyword>
<keyword id="KW-0689">Ribosomal protein</keyword>